<organism>
    <name type="scientific">Acidovorax sp. (strain JS42)</name>
    <dbReference type="NCBI Taxonomy" id="232721"/>
    <lineage>
        <taxon>Bacteria</taxon>
        <taxon>Pseudomonadati</taxon>
        <taxon>Pseudomonadota</taxon>
        <taxon>Betaproteobacteria</taxon>
        <taxon>Burkholderiales</taxon>
        <taxon>Comamonadaceae</taxon>
        <taxon>Acidovorax</taxon>
    </lineage>
</organism>
<accession>A1W450</accession>
<gene>
    <name evidence="1" type="primary">tatA</name>
    <name type="ordered locus">Ajs_0781</name>
</gene>
<proteinExistence type="inferred from homology"/>
<keyword id="KW-0997">Cell inner membrane</keyword>
<keyword id="KW-1003">Cell membrane</keyword>
<keyword id="KW-0472">Membrane</keyword>
<keyword id="KW-0653">Protein transport</keyword>
<keyword id="KW-0811">Translocation</keyword>
<keyword id="KW-0812">Transmembrane</keyword>
<keyword id="KW-1133">Transmembrane helix</keyword>
<keyword id="KW-0813">Transport</keyword>
<name>TATA_ACISJ</name>
<sequence>MGSFSIWHWLIVLLIVVMVFGTKKLKNIGSDLGGAVKGFKDGMKDGASTDDSATTSAPAGQVTNNSTAADKTTIDVEAKHKS</sequence>
<evidence type="ECO:0000255" key="1">
    <source>
        <dbReference type="HAMAP-Rule" id="MF_00236"/>
    </source>
</evidence>
<evidence type="ECO:0000256" key="2">
    <source>
        <dbReference type="SAM" id="MobiDB-lite"/>
    </source>
</evidence>
<feature type="chain" id="PRO_1000044348" description="Sec-independent protein translocase protein TatA">
    <location>
        <begin position="1"/>
        <end position="82"/>
    </location>
</feature>
<feature type="transmembrane region" description="Helical" evidence="1">
    <location>
        <begin position="1"/>
        <end position="21"/>
    </location>
</feature>
<feature type="region of interest" description="Disordered" evidence="2">
    <location>
        <begin position="46"/>
        <end position="82"/>
    </location>
</feature>
<feature type="compositionally biased region" description="Polar residues" evidence="2">
    <location>
        <begin position="49"/>
        <end position="70"/>
    </location>
</feature>
<feature type="compositionally biased region" description="Basic and acidic residues" evidence="2">
    <location>
        <begin position="72"/>
        <end position="82"/>
    </location>
</feature>
<comment type="function">
    <text evidence="1">Part of the twin-arginine translocation (Tat) system that transports large folded proteins containing a characteristic twin-arginine motif in their signal peptide across membranes. TatA could form the protein-conducting channel of the Tat system.</text>
</comment>
<comment type="subunit">
    <text evidence="1">The Tat system comprises two distinct complexes: a TatABC complex, containing multiple copies of TatA, TatB and TatC subunits, and a separate TatA complex, containing only TatA subunits. Substrates initially bind to the TatABC complex, which probably triggers association of the separate TatA complex to form the active translocon.</text>
</comment>
<comment type="subcellular location">
    <subcellularLocation>
        <location evidence="1">Cell inner membrane</location>
        <topology evidence="1">Single-pass membrane protein</topology>
    </subcellularLocation>
</comment>
<comment type="similarity">
    <text evidence="1">Belongs to the TatA/E family.</text>
</comment>
<protein>
    <recommendedName>
        <fullName evidence="1">Sec-independent protein translocase protein TatA</fullName>
    </recommendedName>
</protein>
<dbReference type="EMBL" id="CP000539">
    <property type="protein sequence ID" value="ABM41025.1"/>
    <property type="molecule type" value="Genomic_DNA"/>
</dbReference>
<dbReference type="RefSeq" id="WP_011804230.1">
    <property type="nucleotide sequence ID" value="NZ_CP016278.1"/>
</dbReference>
<dbReference type="SMR" id="A1W450"/>
<dbReference type="STRING" id="232721.Ajs_0781"/>
<dbReference type="GeneID" id="84682697"/>
<dbReference type="KEGG" id="ajs:Ajs_0781"/>
<dbReference type="eggNOG" id="COG1826">
    <property type="taxonomic scope" value="Bacteria"/>
</dbReference>
<dbReference type="HOGENOM" id="CLU_086034_5_1_4"/>
<dbReference type="Proteomes" id="UP000000645">
    <property type="component" value="Chromosome"/>
</dbReference>
<dbReference type="GO" id="GO:0033281">
    <property type="term" value="C:TAT protein transport complex"/>
    <property type="evidence" value="ECO:0007669"/>
    <property type="project" value="UniProtKB-UniRule"/>
</dbReference>
<dbReference type="GO" id="GO:0008320">
    <property type="term" value="F:protein transmembrane transporter activity"/>
    <property type="evidence" value="ECO:0007669"/>
    <property type="project" value="UniProtKB-UniRule"/>
</dbReference>
<dbReference type="GO" id="GO:0043953">
    <property type="term" value="P:protein transport by the Tat complex"/>
    <property type="evidence" value="ECO:0007669"/>
    <property type="project" value="UniProtKB-UniRule"/>
</dbReference>
<dbReference type="Gene3D" id="1.20.5.3310">
    <property type="match status" value="1"/>
</dbReference>
<dbReference type="HAMAP" id="MF_00236">
    <property type="entry name" value="TatA_E"/>
    <property type="match status" value="1"/>
</dbReference>
<dbReference type="InterPro" id="IPR003369">
    <property type="entry name" value="TatA/B/E"/>
</dbReference>
<dbReference type="InterPro" id="IPR006312">
    <property type="entry name" value="TatA/E"/>
</dbReference>
<dbReference type="NCBIfam" id="NF002813">
    <property type="entry name" value="PRK02958.1"/>
    <property type="match status" value="1"/>
</dbReference>
<dbReference type="NCBIfam" id="TIGR01411">
    <property type="entry name" value="tatAE"/>
    <property type="match status" value="1"/>
</dbReference>
<dbReference type="PANTHER" id="PTHR42982">
    <property type="entry name" value="SEC-INDEPENDENT PROTEIN TRANSLOCASE PROTEIN TATA"/>
    <property type="match status" value="1"/>
</dbReference>
<dbReference type="PANTHER" id="PTHR42982:SF1">
    <property type="entry name" value="SEC-INDEPENDENT PROTEIN TRANSLOCASE PROTEIN TATA"/>
    <property type="match status" value="1"/>
</dbReference>
<dbReference type="Pfam" id="PF02416">
    <property type="entry name" value="TatA_B_E"/>
    <property type="match status" value="1"/>
</dbReference>
<reference key="1">
    <citation type="submission" date="2006-12" db="EMBL/GenBank/DDBJ databases">
        <title>Complete sequence of chromosome 1 of Acidovorax sp. JS42.</title>
        <authorList>
            <person name="Copeland A."/>
            <person name="Lucas S."/>
            <person name="Lapidus A."/>
            <person name="Barry K."/>
            <person name="Detter J.C."/>
            <person name="Glavina del Rio T."/>
            <person name="Dalin E."/>
            <person name="Tice H."/>
            <person name="Pitluck S."/>
            <person name="Chertkov O."/>
            <person name="Brettin T."/>
            <person name="Bruce D."/>
            <person name="Han C."/>
            <person name="Tapia R."/>
            <person name="Gilna P."/>
            <person name="Schmutz J."/>
            <person name="Larimer F."/>
            <person name="Land M."/>
            <person name="Hauser L."/>
            <person name="Kyrpides N."/>
            <person name="Kim E."/>
            <person name="Stahl D."/>
            <person name="Richardson P."/>
        </authorList>
    </citation>
    <scope>NUCLEOTIDE SEQUENCE [LARGE SCALE GENOMIC DNA]</scope>
    <source>
        <strain>JS42</strain>
    </source>
</reference>